<reference key="1">
    <citation type="journal article" date="2009" name="PLoS Genet.">
        <title>Organised genome dynamics in the Escherichia coli species results in highly diverse adaptive paths.</title>
        <authorList>
            <person name="Touchon M."/>
            <person name="Hoede C."/>
            <person name="Tenaillon O."/>
            <person name="Barbe V."/>
            <person name="Baeriswyl S."/>
            <person name="Bidet P."/>
            <person name="Bingen E."/>
            <person name="Bonacorsi S."/>
            <person name="Bouchier C."/>
            <person name="Bouvet O."/>
            <person name="Calteau A."/>
            <person name="Chiapello H."/>
            <person name="Clermont O."/>
            <person name="Cruveiller S."/>
            <person name="Danchin A."/>
            <person name="Diard M."/>
            <person name="Dossat C."/>
            <person name="Karoui M.E."/>
            <person name="Frapy E."/>
            <person name="Garry L."/>
            <person name="Ghigo J.M."/>
            <person name="Gilles A.M."/>
            <person name="Johnson J."/>
            <person name="Le Bouguenec C."/>
            <person name="Lescat M."/>
            <person name="Mangenot S."/>
            <person name="Martinez-Jehanne V."/>
            <person name="Matic I."/>
            <person name="Nassif X."/>
            <person name="Oztas S."/>
            <person name="Petit M.A."/>
            <person name="Pichon C."/>
            <person name="Rouy Z."/>
            <person name="Ruf C.S."/>
            <person name="Schneider D."/>
            <person name="Tourret J."/>
            <person name="Vacherie B."/>
            <person name="Vallenet D."/>
            <person name="Medigue C."/>
            <person name="Rocha E.P.C."/>
            <person name="Denamur E."/>
        </authorList>
    </citation>
    <scope>NUCLEOTIDE SEQUENCE [LARGE SCALE GENOMIC DNA]</scope>
    <source>
        <strain>IAI1</strain>
    </source>
</reference>
<feature type="chain" id="PRO_1000137563" description="Protein GrpE">
    <location>
        <begin position="1"/>
        <end position="197"/>
    </location>
</feature>
<feature type="region of interest" description="Disordered" evidence="2">
    <location>
        <begin position="1"/>
        <end position="39"/>
    </location>
</feature>
<gene>
    <name evidence="1" type="primary">grpE</name>
    <name type="ordered locus">ECIAI1_2735</name>
</gene>
<protein>
    <recommendedName>
        <fullName evidence="1">Protein GrpE</fullName>
    </recommendedName>
    <alternativeName>
        <fullName evidence="1">HSP-70 cofactor</fullName>
    </alternativeName>
</protein>
<keyword id="KW-0143">Chaperone</keyword>
<keyword id="KW-0963">Cytoplasm</keyword>
<keyword id="KW-0346">Stress response</keyword>
<name>GRPE_ECO8A</name>
<proteinExistence type="inferred from homology"/>
<accession>B7M983</accession>
<evidence type="ECO:0000255" key="1">
    <source>
        <dbReference type="HAMAP-Rule" id="MF_01151"/>
    </source>
</evidence>
<evidence type="ECO:0000256" key="2">
    <source>
        <dbReference type="SAM" id="MobiDB-lite"/>
    </source>
</evidence>
<organism>
    <name type="scientific">Escherichia coli O8 (strain IAI1)</name>
    <dbReference type="NCBI Taxonomy" id="585034"/>
    <lineage>
        <taxon>Bacteria</taxon>
        <taxon>Pseudomonadati</taxon>
        <taxon>Pseudomonadota</taxon>
        <taxon>Gammaproteobacteria</taxon>
        <taxon>Enterobacterales</taxon>
        <taxon>Enterobacteriaceae</taxon>
        <taxon>Escherichia</taxon>
    </lineage>
</organism>
<sequence length="197" mass="21812">MSSKEQKTPEGQAPEEIIMDQHEEIEAVEPEASAEQVDPRDEKIANLEAQLAEAQTRERDGILRVKAEMENLRRRTELDIEKAHKFALEKFINELLPVIDSLDRALEVADKANPDMSAMVEGIELTLKSMLDVVRKFGVEVIAETNVPLDPNVHQAIAMVESDDVAPGNVLGIMQKGYTLNGRTIRAAMVTVAKAKA</sequence>
<dbReference type="EMBL" id="CU928160">
    <property type="protein sequence ID" value="CAQ99562.1"/>
    <property type="molecule type" value="Genomic_DNA"/>
</dbReference>
<dbReference type="RefSeq" id="WP_001296310.1">
    <property type="nucleotide sequence ID" value="NC_011741.1"/>
</dbReference>
<dbReference type="SMR" id="B7M983"/>
<dbReference type="GeneID" id="93774463"/>
<dbReference type="KEGG" id="ecr:ECIAI1_2735"/>
<dbReference type="HOGENOM" id="CLU_057217_6_0_6"/>
<dbReference type="GO" id="GO:0005829">
    <property type="term" value="C:cytosol"/>
    <property type="evidence" value="ECO:0007669"/>
    <property type="project" value="TreeGrafter"/>
</dbReference>
<dbReference type="GO" id="GO:0000774">
    <property type="term" value="F:adenyl-nucleotide exchange factor activity"/>
    <property type="evidence" value="ECO:0007669"/>
    <property type="project" value="InterPro"/>
</dbReference>
<dbReference type="GO" id="GO:0042803">
    <property type="term" value="F:protein homodimerization activity"/>
    <property type="evidence" value="ECO:0007669"/>
    <property type="project" value="InterPro"/>
</dbReference>
<dbReference type="GO" id="GO:0051087">
    <property type="term" value="F:protein-folding chaperone binding"/>
    <property type="evidence" value="ECO:0007669"/>
    <property type="project" value="InterPro"/>
</dbReference>
<dbReference type="GO" id="GO:0051082">
    <property type="term" value="F:unfolded protein binding"/>
    <property type="evidence" value="ECO:0007669"/>
    <property type="project" value="TreeGrafter"/>
</dbReference>
<dbReference type="GO" id="GO:0006457">
    <property type="term" value="P:protein folding"/>
    <property type="evidence" value="ECO:0007669"/>
    <property type="project" value="InterPro"/>
</dbReference>
<dbReference type="CDD" id="cd00446">
    <property type="entry name" value="GrpE"/>
    <property type="match status" value="1"/>
</dbReference>
<dbReference type="FunFam" id="2.30.22.10:FF:000001">
    <property type="entry name" value="Protein GrpE"/>
    <property type="match status" value="1"/>
</dbReference>
<dbReference type="FunFam" id="3.90.20.20:FF:000001">
    <property type="entry name" value="Protein GrpE"/>
    <property type="match status" value="1"/>
</dbReference>
<dbReference type="Gene3D" id="3.90.20.20">
    <property type="match status" value="1"/>
</dbReference>
<dbReference type="Gene3D" id="2.30.22.10">
    <property type="entry name" value="Head domain of nucleotide exchange factor GrpE"/>
    <property type="match status" value="1"/>
</dbReference>
<dbReference type="HAMAP" id="MF_01151">
    <property type="entry name" value="GrpE"/>
    <property type="match status" value="1"/>
</dbReference>
<dbReference type="InterPro" id="IPR000740">
    <property type="entry name" value="GrpE"/>
</dbReference>
<dbReference type="InterPro" id="IPR013805">
    <property type="entry name" value="GrpE_coiled_coil"/>
</dbReference>
<dbReference type="InterPro" id="IPR009012">
    <property type="entry name" value="GrpE_head"/>
</dbReference>
<dbReference type="NCBIfam" id="NF007655">
    <property type="entry name" value="PRK10325.1"/>
    <property type="match status" value="1"/>
</dbReference>
<dbReference type="NCBIfam" id="NF010738">
    <property type="entry name" value="PRK14140.1"/>
    <property type="match status" value="1"/>
</dbReference>
<dbReference type="NCBIfam" id="NF010748">
    <property type="entry name" value="PRK14150.1"/>
    <property type="match status" value="1"/>
</dbReference>
<dbReference type="PANTHER" id="PTHR21237">
    <property type="entry name" value="GRPE PROTEIN"/>
    <property type="match status" value="1"/>
</dbReference>
<dbReference type="PANTHER" id="PTHR21237:SF23">
    <property type="entry name" value="GRPE PROTEIN HOMOLOG, MITOCHONDRIAL"/>
    <property type="match status" value="1"/>
</dbReference>
<dbReference type="Pfam" id="PF01025">
    <property type="entry name" value="GrpE"/>
    <property type="match status" value="1"/>
</dbReference>
<dbReference type="PRINTS" id="PR00773">
    <property type="entry name" value="GRPEPROTEIN"/>
</dbReference>
<dbReference type="SUPFAM" id="SSF58014">
    <property type="entry name" value="Coiled-coil domain of nucleotide exchange factor GrpE"/>
    <property type="match status" value="1"/>
</dbReference>
<dbReference type="SUPFAM" id="SSF51064">
    <property type="entry name" value="Head domain of nucleotide exchange factor GrpE"/>
    <property type="match status" value="1"/>
</dbReference>
<dbReference type="PROSITE" id="PS01071">
    <property type="entry name" value="GRPE"/>
    <property type="match status" value="1"/>
</dbReference>
<comment type="function">
    <text evidence="1">Participates actively in the response to hyperosmotic and heat shock by preventing the aggregation of stress-denatured proteins, in association with DnaK and GrpE. It is the nucleotide exchange factor for DnaK and may function as a thermosensor. Unfolded proteins bind initially to DnaJ; upon interaction with the DnaJ-bound protein, DnaK hydrolyzes its bound ATP, resulting in the formation of a stable complex. GrpE releases ADP from DnaK; ATP binding to DnaK triggers the release of the substrate protein, thus completing the reaction cycle. Several rounds of ATP-dependent interactions between DnaJ, DnaK and GrpE are required for fully efficient folding.</text>
</comment>
<comment type="subunit">
    <text evidence="1">Homodimer.</text>
</comment>
<comment type="subcellular location">
    <subcellularLocation>
        <location evidence="1">Cytoplasm</location>
    </subcellularLocation>
</comment>
<comment type="similarity">
    <text evidence="1">Belongs to the GrpE family.</text>
</comment>